<feature type="chain" id="PRO_0000337377" description="Elongation factor Tu">
    <location>
        <begin position="1"/>
        <end position="395"/>
    </location>
</feature>
<feature type="domain" description="tr-type G">
    <location>
        <begin position="6"/>
        <end position="205"/>
    </location>
</feature>
<feature type="region of interest" description="G1" evidence="1">
    <location>
        <begin position="15"/>
        <end position="22"/>
    </location>
</feature>
<feature type="region of interest" description="G2" evidence="1">
    <location>
        <begin position="59"/>
        <end position="63"/>
    </location>
</feature>
<feature type="region of interest" description="G3" evidence="1">
    <location>
        <begin position="80"/>
        <end position="83"/>
    </location>
</feature>
<feature type="region of interest" description="G4" evidence="1">
    <location>
        <begin position="135"/>
        <end position="138"/>
    </location>
</feature>
<feature type="region of interest" description="G5" evidence="1">
    <location>
        <begin position="173"/>
        <end position="175"/>
    </location>
</feature>
<feature type="binding site" evidence="2">
    <location>
        <begin position="15"/>
        <end position="22"/>
    </location>
    <ligand>
        <name>GTP</name>
        <dbReference type="ChEBI" id="CHEBI:37565"/>
    </ligand>
</feature>
<feature type="binding site" evidence="2">
    <location>
        <position position="22"/>
    </location>
    <ligand>
        <name>Mg(2+)</name>
        <dbReference type="ChEBI" id="CHEBI:18420"/>
    </ligand>
</feature>
<feature type="binding site" evidence="2">
    <location>
        <begin position="80"/>
        <end position="84"/>
    </location>
    <ligand>
        <name>GTP</name>
        <dbReference type="ChEBI" id="CHEBI:37565"/>
    </ligand>
</feature>
<feature type="binding site" evidence="2">
    <location>
        <begin position="135"/>
        <end position="138"/>
    </location>
    <ligand>
        <name>GTP</name>
        <dbReference type="ChEBI" id="CHEBI:37565"/>
    </ligand>
</feature>
<reference key="1">
    <citation type="journal article" date="2005" name="Proc. Natl. Acad. Sci. U.S.A.">
        <title>The genome of the heartwater agent Ehrlichia ruminantium contains multiple tandem repeats of actively variable copy number.</title>
        <authorList>
            <person name="Collins N.E."/>
            <person name="Liebenberg J."/>
            <person name="de Villiers E.P."/>
            <person name="Brayton K.A."/>
            <person name="Louw E."/>
            <person name="Pretorius A."/>
            <person name="Faber F.E."/>
            <person name="van Heerden H."/>
            <person name="Josemans A."/>
            <person name="van Kleef M."/>
            <person name="Steyn H.C."/>
            <person name="van Strijp M.F."/>
            <person name="Zweygarth E."/>
            <person name="Jongejan F."/>
            <person name="Maillard J.C."/>
            <person name="Berthier D."/>
            <person name="Botha M."/>
            <person name="Joubert F."/>
            <person name="Corton C.H."/>
            <person name="Thomson N.R."/>
            <person name="Allsopp M.T."/>
            <person name="Allsopp B.A."/>
        </authorList>
    </citation>
    <scope>NUCLEOTIDE SEQUENCE [LARGE SCALE GENOMIC DNA]</scope>
    <source>
        <strain>Welgevonden</strain>
    </source>
</reference>
<reference key="2">
    <citation type="journal article" date="2006" name="J. Bacteriol.">
        <title>Comparative genomic analysis of three strains of Ehrlichia ruminantium reveals an active process of genome size plasticity.</title>
        <authorList>
            <person name="Frutos R."/>
            <person name="Viari A."/>
            <person name="Ferraz C."/>
            <person name="Morgat A."/>
            <person name="Eychenie S."/>
            <person name="Kandassamy Y."/>
            <person name="Chantal I."/>
            <person name="Bensaid A."/>
            <person name="Coissac E."/>
            <person name="Vachiery N."/>
            <person name="Demaille J."/>
            <person name="Martinez D."/>
        </authorList>
    </citation>
    <scope>NUCLEOTIDE SEQUENCE [LARGE SCALE GENOMIC DNA]</scope>
    <source>
        <strain>Welgevonden</strain>
    </source>
</reference>
<comment type="function">
    <text evidence="2">GTP hydrolase that promotes the GTP-dependent binding of aminoacyl-tRNA to the A-site of ribosomes during protein biosynthesis.</text>
</comment>
<comment type="catalytic activity">
    <reaction evidence="2">
        <text>GTP + H2O = GDP + phosphate + H(+)</text>
        <dbReference type="Rhea" id="RHEA:19669"/>
        <dbReference type="ChEBI" id="CHEBI:15377"/>
        <dbReference type="ChEBI" id="CHEBI:15378"/>
        <dbReference type="ChEBI" id="CHEBI:37565"/>
        <dbReference type="ChEBI" id="CHEBI:43474"/>
        <dbReference type="ChEBI" id="CHEBI:58189"/>
        <dbReference type="EC" id="3.6.5.3"/>
    </reaction>
    <physiologicalReaction direction="left-to-right" evidence="2">
        <dbReference type="Rhea" id="RHEA:19670"/>
    </physiologicalReaction>
</comment>
<comment type="subunit">
    <text evidence="2">Monomer.</text>
</comment>
<comment type="subcellular location">
    <subcellularLocation>
        <location evidence="2">Cytoplasm</location>
    </subcellularLocation>
</comment>
<comment type="similarity">
    <text evidence="2">Belongs to the TRAFAC class translation factor GTPase superfamily. Classic translation factor GTPase family. EF-Tu/EF-1A subfamily.</text>
</comment>
<comment type="caution">
    <text evidence="4">The equivalent of tuf1 in the CIRAD genome (AC Q5FCW3) is annotated as a frameshift version requiring 2 frameshifts to produce full-length protein.</text>
</comment>
<comment type="sequence caution" evidence="3">
    <conflict type="erroneous initiation">
        <sequence resource="EMBL-CDS" id="CAI27134"/>
    </conflict>
    <text>Extended N-terminus.</text>
</comment>
<proteinExistence type="inferred from homology"/>
<gene>
    <name evidence="2" type="primary">tuf1</name>
    <name type="synonym">tufA</name>
    <name type="ordered locus">Erum1660</name>
</gene>
<gene>
    <name evidence="2" type="primary">tuf2</name>
    <name type="synonym">tufB</name>
    <name type="ordered locus">Erum6090</name>
    <name type="ordered locus">ERWE_CDS_06400</name>
</gene>
<sequence>MVDGRKPHINVGTIGHVDHGKTTLTAALTTVLAKRLSGEGNKSVKYDEIDKAPEEKARGITISTAHVEYETENRHYAHVDCPGHADYIKNMITGAAQMDAAILVVSATDGAMPQTREHILLAKQVGVKDIVVWMNKCDVVDDEEMLSLVEMEIRELLTKYGYPGDDIDVVKGSAVKALEEESADGVWSEKIMELMNALEKIDLPIREKDKPFLMSIEDVFSIPGRGTVVTGRIERGVIKVGDKIDIVGLRDIQSTVCTGVEMFHKALDAGEAGDNAGILLRGIKKEDVERGQVLSAPGQIHSYKGFKAEVYVLKKEEGGRHTPFFSNYQPQFYVRTTDVTGNIKLPDGVEMVMPGDNISIEVNLDKPVAIDKGLRFAIREGGRTIGSGIITEILE</sequence>
<dbReference type="EC" id="3.6.5.3" evidence="2"/>
<dbReference type="EMBL" id="CR767821">
    <property type="protein sequence ID" value="CAH57882.1"/>
    <property type="molecule type" value="Genomic_DNA"/>
</dbReference>
<dbReference type="EMBL" id="CR767821">
    <property type="protein sequence ID" value="CAH58341.1"/>
    <property type="molecule type" value="Genomic_DNA"/>
</dbReference>
<dbReference type="EMBL" id="CR925678">
    <property type="protein sequence ID" value="CAI27134.1"/>
    <property type="status" value="ALT_INIT"/>
    <property type="molecule type" value="Genomic_DNA"/>
</dbReference>
<dbReference type="RefSeq" id="WP_011154850.1">
    <property type="nucleotide sequence ID" value="NC_005295.2"/>
</dbReference>
<dbReference type="SMR" id="Q5HAS0"/>
<dbReference type="GeneID" id="33058428"/>
<dbReference type="KEGG" id="eru:Erum1660"/>
<dbReference type="KEGG" id="eru:Erum6090"/>
<dbReference type="KEGG" id="erw:ERWE_CDS_06400"/>
<dbReference type="eggNOG" id="COG0050">
    <property type="taxonomic scope" value="Bacteria"/>
</dbReference>
<dbReference type="HOGENOM" id="CLU_007265_0_1_5"/>
<dbReference type="Proteomes" id="UP000001021">
    <property type="component" value="Chromosome"/>
</dbReference>
<dbReference type="GO" id="GO:0005829">
    <property type="term" value="C:cytosol"/>
    <property type="evidence" value="ECO:0007669"/>
    <property type="project" value="TreeGrafter"/>
</dbReference>
<dbReference type="GO" id="GO:0005525">
    <property type="term" value="F:GTP binding"/>
    <property type="evidence" value="ECO:0007669"/>
    <property type="project" value="UniProtKB-UniRule"/>
</dbReference>
<dbReference type="GO" id="GO:0003924">
    <property type="term" value="F:GTPase activity"/>
    <property type="evidence" value="ECO:0007669"/>
    <property type="project" value="InterPro"/>
</dbReference>
<dbReference type="GO" id="GO:0097216">
    <property type="term" value="F:guanosine tetraphosphate binding"/>
    <property type="evidence" value="ECO:0007669"/>
    <property type="project" value="UniProtKB-ARBA"/>
</dbReference>
<dbReference type="GO" id="GO:0003746">
    <property type="term" value="F:translation elongation factor activity"/>
    <property type="evidence" value="ECO:0007669"/>
    <property type="project" value="UniProtKB-UniRule"/>
</dbReference>
<dbReference type="CDD" id="cd01884">
    <property type="entry name" value="EF_Tu"/>
    <property type="match status" value="1"/>
</dbReference>
<dbReference type="CDD" id="cd03697">
    <property type="entry name" value="EFTU_II"/>
    <property type="match status" value="1"/>
</dbReference>
<dbReference type="CDD" id="cd03707">
    <property type="entry name" value="EFTU_III"/>
    <property type="match status" value="1"/>
</dbReference>
<dbReference type="FunFam" id="2.40.30.10:FF:000001">
    <property type="entry name" value="Elongation factor Tu"/>
    <property type="match status" value="1"/>
</dbReference>
<dbReference type="FunFam" id="3.40.50.300:FF:000003">
    <property type="entry name" value="Elongation factor Tu"/>
    <property type="match status" value="1"/>
</dbReference>
<dbReference type="Gene3D" id="3.40.50.300">
    <property type="entry name" value="P-loop containing nucleotide triphosphate hydrolases"/>
    <property type="match status" value="1"/>
</dbReference>
<dbReference type="Gene3D" id="2.40.30.10">
    <property type="entry name" value="Translation factors"/>
    <property type="match status" value="2"/>
</dbReference>
<dbReference type="HAMAP" id="MF_00118_B">
    <property type="entry name" value="EF_Tu_B"/>
    <property type="match status" value="1"/>
</dbReference>
<dbReference type="InterPro" id="IPR041709">
    <property type="entry name" value="EF-Tu_GTP-bd"/>
</dbReference>
<dbReference type="InterPro" id="IPR050055">
    <property type="entry name" value="EF-Tu_GTPase"/>
</dbReference>
<dbReference type="InterPro" id="IPR004161">
    <property type="entry name" value="EFTu-like_2"/>
</dbReference>
<dbReference type="InterPro" id="IPR033720">
    <property type="entry name" value="EFTU_2"/>
</dbReference>
<dbReference type="InterPro" id="IPR031157">
    <property type="entry name" value="G_TR_CS"/>
</dbReference>
<dbReference type="InterPro" id="IPR027417">
    <property type="entry name" value="P-loop_NTPase"/>
</dbReference>
<dbReference type="InterPro" id="IPR005225">
    <property type="entry name" value="Small_GTP-bd"/>
</dbReference>
<dbReference type="InterPro" id="IPR000795">
    <property type="entry name" value="T_Tr_GTP-bd_dom"/>
</dbReference>
<dbReference type="InterPro" id="IPR009000">
    <property type="entry name" value="Transl_B-barrel_sf"/>
</dbReference>
<dbReference type="InterPro" id="IPR009001">
    <property type="entry name" value="Transl_elong_EF1A/Init_IF2_C"/>
</dbReference>
<dbReference type="InterPro" id="IPR004541">
    <property type="entry name" value="Transl_elong_EFTu/EF1A_bac/org"/>
</dbReference>
<dbReference type="InterPro" id="IPR004160">
    <property type="entry name" value="Transl_elong_EFTu/EF1A_C"/>
</dbReference>
<dbReference type="NCBIfam" id="TIGR00485">
    <property type="entry name" value="EF-Tu"/>
    <property type="match status" value="1"/>
</dbReference>
<dbReference type="NCBIfam" id="NF000766">
    <property type="entry name" value="PRK00049.1"/>
    <property type="match status" value="1"/>
</dbReference>
<dbReference type="NCBIfam" id="NF009372">
    <property type="entry name" value="PRK12735.1"/>
    <property type="match status" value="1"/>
</dbReference>
<dbReference type="NCBIfam" id="NF009373">
    <property type="entry name" value="PRK12736.1"/>
    <property type="match status" value="1"/>
</dbReference>
<dbReference type="NCBIfam" id="TIGR00231">
    <property type="entry name" value="small_GTP"/>
    <property type="match status" value="1"/>
</dbReference>
<dbReference type="PANTHER" id="PTHR43721:SF22">
    <property type="entry name" value="ELONGATION FACTOR TU, MITOCHONDRIAL"/>
    <property type="match status" value="1"/>
</dbReference>
<dbReference type="PANTHER" id="PTHR43721">
    <property type="entry name" value="ELONGATION FACTOR TU-RELATED"/>
    <property type="match status" value="1"/>
</dbReference>
<dbReference type="Pfam" id="PF00009">
    <property type="entry name" value="GTP_EFTU"/>
    <property type="match status" value="1"/>
</dbReference>
<dbReference type="Pfam" id="PF03144">
    <property type="entry name" value="GTP_EFTU_D2"/>
    <property type="match status" value="1"/>
</dbReference>
<dbReference type="Pfam" id="PF03143">
    <property type="entry name" value="GTP_EFTU_D3"/>
    <property type="match status" value="1"/>
</dbReference>
<dbReference type="PRINTS" id="PR00315">
    <property type="entry name" value="ELONGATNFCT"/>
</dbReference>
<dbReference type="SUPFAM" id="SSF50465">
    <property type="entry name" value="EF-Tu/eEF-1alpha/eIF2-gamma C-terminal domain"/>
    <property type="match status" value="1"/>
</dbReference>
<dbReference type="SUPFAM" id="SSF52540">
    <property type="entry name" value="P-loop containing nucleoside triphosphate hydrolases"/>
    <property type="match status" value="1"/>
</dbReference>
<dbReference type="SUPFAM" id="SSF50447">
    <property type="entry name" value="Translation proteins"/>
    <property type="match status" value="1"/>
</dbReference>
<dbReference type="PROSITE" id="PS00301">
    <property type="entry name" value="G_TR_1"/>
    <property type="match status" value="1"/>
</dbReference>
<dbReference type="PROSITE" id="PS51722">
    <property type="entry name" value="G_TR_2"/>
    <property type="match status" value="1"/>
</dbReference>
<evidence type="ECO:0000250" key="1"/>
<evidence type="ECO:0000255" key="2">
    <source>
        <dbReference type="HAMAP-Rule" id="MF_00118"/>
    </source>
</evidence>
<evidence type="ECO:0000305" key="3"/>
<evidence type="ECO:0000305" key="4">
    <source>
    </source>
</evidence>
<accession>Q5HAS0</accession>
<accession>Q5FD56</accession>
<keyword id="KW-0963">Cytoplasm</keyword>
<keyword id="KW-0251">Elongation factor</keyword>
<keyword id="KW-0342">GTP-binding</keyword>
<keyword id="KW-0378">Hydrolase</keyword>
<keyword id="KW-0460">Magnesium</keyword>
<keyword id="KW-0479">Metal-binding</keyword>
<keyword id="KW-0547">Nucleotide-binding</keyword>
<keyword id="KW-0648">Protein biosynthesis</keyword>
<organism>
    <name type="scientific">Ehrlichia ruminantium (strain Welgevonden)</name>
    <dbReference type="NCBI Taxonomy" id="254945"/>
    <lineage>
        <taxon>Bacteria</taxon>
        <taxon>Pseudomonadati</taxon>
        <taxon>Pseudomonadota</taxon>
        <taxon>Alphaproteobacteria</taxon>
        <taxon>Rickettsiales</taxon>
        <taxon>Anaplasmataceae</taxon>
        <taxon>Ehrlichia</taxon>
    </lineage>
</organism>
<name>EFTU_EHRRW</name>
<protein>
    <recommendedName>
        <fullName evidence="2">Elongation factor Tu</fullName>
        <shortName evidence="2">EF-Tu</shortName>
        <ecNumber evidence="2">3.6.5.3</ecNumber>
    </recommendedName>
</protein>